<comment type="function">
    <text evidence="1">Presumably involved in the processing and regular turnover of intracellular proteins. Catalyzes the removal of unsubstituted N-terminal amino acids from various peptides.</text>
</comment>
<comment type="catalytic activity">
    <reaction evidence="1">
        <text>Release of an N-terminal amino acid, Xaa-|-Yaa-, in which Xaa is preferably Leu, but may be other amino acids including Pro although not Arg or Lys, and Yaa may be Pro. Amino acid amides and methyl esters are also readily hydrolyzed, but rates on arylamides are exceedingly low.</text>
        <dbReference type="EC" id="3.4.11.1"/>
    </reaction>
</comment>
<comment type="catalytic activity">
    <reaction evidence="1">
        <text>Release of an N-terminal amino acid, preferentially leucine, but not glutamic or aspartic acids.</text>
        <dbReference type="EC" id="3.4.11.10"/>
    </reaction>
</comment>
<comment type="cofactor">
    <cofactor evidence="1">
        <name>Mn(2+)</name>
        <dbReference type="ChEBI" id="CHEBI:29035"/>
    </cofactor>
    <text evidence="1">Binds 2 manganese ions per subunit.</text>
</comment>
<comment type="subcellular location">
    <subcellularLocation>
        <location evidence="1">Cytoplasm</location>
    </subcellularLocation>
</comment>
<comment type="similarity">
    <text evidence="1">Belongs to the peptidase M17 family.</text>
</comment>
<keyword id="KW-0031">Aminopeptidase</keyword>
<keyword id="KW-0963">Cytoplasm</keyword>
<keyword id="KW-0378">Hydrolase</keyword>
<keyword id="KW-0464">Manganese</keyword>
<keyword id="KW-0479">Metal-binding</keyword>
<keyword id="KW-0645">Protease</keyword>
<name>AMPA_ACIBS</name>
<protein>
    <recommendedName>
        <fullName evidence="1">Probable cytosol aminopeptidase</fullName>
        <ecNumber evidence="1">3.4.11.1</ecNumber>
    </recommendedName>
    <alternativeName>
        <fullName evidence="1">Leucine aminopeptidase</fullName>
        <shortName evidence="1">LAP</shortName>
        <ecNumber evidence="1">3.4.11.10</ecNumber>
    </alternativeName>
    <alternativeName>
        <fullName evidence="1">Leucyl aminopeptidase</fullName>
    </alternativeName>
</protein>
<accession>B0VMG3</accession>
<organism>
    <name type="scientific">Acinetobacter baumannii (strain SDF)</name>
    <dbReference type="NCBI Taxonomy" id="509170"/>
    <lineage>
        <taxon>Bacteria</taxon>
        <taxon>Pseudomonadati</taxon>
        <taxon>Pseudomonadota</taxon>
        <taxon>Gammaproteobacteria</taxon>
        <taxon>Moraxellales</taxon>
        <taxon>Moraxellaceae</taxon>
        <taxon>Acinetobacter</taxon>
        <taxon>Acinetobacter calcoaceticus/baumannii complex</taxon>
    </lineage>
</organism>
<reference key="1">
    <citation type="journal article" date="2008" name="PLoS ONE">
        <title>Comparative analysis of Acinetobacters: three genomes for three lifestyles.</title>
        <authorList>
            <person name="Vallenet D."/>
            <person name="Nordmann P."/>
            <person name="Barbe V."/>
            <person name="Poirel L."/>
            <person name="Mangenot S."/>
            <person name="Bataille E."/>
            <person name="Dossat C."/>
            <person name="Gas S."/>
            <person name="Kreimeyer A."/>
            <person name="Lenoble P."/>
            <person name="Oztas S."/>
            <person name="Poulain J."/>
            <person name="Segurens B."/>
            <person name="Robert C."/>
            <person name="Abergel C."/>
            <person name="Claverie J.-M."/>
            <person name="Raoult D."/>
            <person name="Medigue C."/>
            <person name="Weissenbach J."/>
            <person name="Cruveiller S."/>
        </authorList>
    </citation>
    <scope>NUCLEOTIDE SEQUENCE [LARGE SCALE GENOMIC DNA]</scope>
    <source>
        <strain>SDF</strain>
    </source>
</reference>
<proteinExistence type="inferred from homology"/>
<gene>
    <name evidence="1" type="primary">pepA</name>
    <name type="ordered locus">ABSDF3308</name>
</gene>
<evidence type="ECO:0000255" key="1">
    <source>
        <dbReference type="HAMAP-Rule" id="MF_00181"/>
    </source>
</evidence>
<sequence>MKFTTYTTFPEQTSNESLWILVDSEQLQSNLNTYQINNLESILTATQFKANFNETLPLFGQLSTQPHSQLLGLGKAAELQAAKLAKLAQTIIKSAQNKFKHIAIDIAALPVEYHYLFALSLTQAAYGYDEFKSTKNEFVLQQVDLISSQTSLDENQLALVHAVQSGQSYARDLGNRPGNICFPEYLAEQALALAAEFPDLLKVTVLNEQQMADLGMYAFLAVSKGSERPGRIVTLEYQAQLEQAPVVLVGKGVTFDTGGISLKPGLGMDEMKFDMCGAASVLGTIRALCEARLPIHVVGAIAAAENMPSGKATRPGDIVTTMSGQTVEILNTDAEGRLVLCDTLTYIKRFNPAVVIDIATLTGACVVALGKVLSGLFSPDDTLAAELQQAGEQSFDRVWRMPVIDDYQELLDSPFADIANIGGPHGGAITAACFLERFTRDYRWAHLDVAGTAWLSGSAKGATGRPVPLLMQFLANRVSTNG</sequence>
<dbReference type="EC" id="3.4.11.1" evidence="1"/>
<dbReference type="EC" id="3.4.11.10" evidence="1"/>
<dbReference type="EMBL" id="CU468230">
    <property type="protein sequence ID" value="CAP02577.1"/>
    <property type="molecule type" value="Genomic_DNA"/>
</dbReference>
<dbReference type="SMR" id="B0VMG3"/>
<dbReference type="MEROPS" id="M17.003"/>
<dbReference type="KEGG" id="abm:ABSDF3308"/>
<dbReference type="HOGENOM" id="CLU_013734_2_2_6"/>
<dbReference type="Proteomes" id="UP000001741">
    <property type="component" value="Chromosome"/>
</dbReference>
<dbReference type="GO" id="GO:0005737">
    <property type="term" value="C:cytoplasm"/>
    <property type="evidence" value="ECO:0007669"/>
    <property type="project" value="UniProtKB-SubCell"/>
</dbReference>
<dbReference type="GO" id="GO:0030145">
    <property type="term" value="F:manganese ion binding"/>
    <property type="evidence" value="ECO:0007669"/>
    <property type="project" value="UniProtKB-UniRule"/>
</dbReference>
<dbReference type="GO" id="GO:0070006">
    <property type="term" value="F:metalloaminopeptidase activity"/>
    <property type="evidence" value="ECO:0007669"/>
    <property type="project" value="InterPro"/>
</dbReference>
<dbReference type="GO" id="GO:0006508">
    <property type="term" value="P:proteolysis"/>
    <property type="evidence" value="ECO:0007669"/>
    <property type="project" value="UniProtKB-KW"/>
</dbReference>
<dbReference type="CDD" id="cd00433">
    <property type="entry name" value="Peptidase_M17"/>
    <property type="match status" value="1"/>
</dbReference>
<dbReference type="FunFam" id="3.40.630.10:FF:000004">
    <property type="entry name" value="Probable cytosol aminopeptidase"/>
    <property type="match status" value="1"/>
</dbReference>
<dbReference type="Gene3D" id="3.40.220.10">
    <property type="entry name" value="Leucine Aminopeptidase, subunit E, domain 1"/>
    <property type="match status" value="1"/>
</dbReference>
<dbReference type="Gene3D" id="3.40.630.10">
    <property type="entry name" value="Zn peptidases"/>
    <property type="match status" value="1"/>
</dbReference>
<dbReference type="HAMAP" id="MF_00181">
    <property type="entry name" value="Cytosol_peptidase_M17"/>
    <property type="match status" value="1"/>
</dbReference>
<dbReference type="InterPro" id="IPR011356">
    <property type="entry name" value="Leucine_aapep/pepB"/>
</dbReference>
<dbReference type="InterPro" id="IPR043472">
    <property type="entry name" value="Macro_dom-like"/>
</dbReference>
<dbReference type="InterPro" id="IPR000819">
    <property type="entry name" value="Peptidase_M17_C"/>
</dbReference>
<dbReference type="InterPro" id="IPR023042">
    <property type="entry name" value="Peptidase_M17_leu_NH2_pept"/>
</dbReference>
<dbReference type="InterPro" id="IPR008283">
    <property type="entry name" value="Peptidase_M17_N"/>
</dbReference>
<dbReference type="NCBIfam" id="NF002074">
    <property type="entry name" value="PRK00913.1-4"/>
    <property type="match status" value="1"/>
</dbReference>
<dbReference type="PANTHER" id="PTHR11963:SF23">
    <property type="entry name" value="CYTOSOL AMINOPEPTIDASE"/>
    <property type="match status" value="1"/>
</dbReference>
<dbReference type="PANTHER" id="PTHR11963">
    <property type="entry name" value="LEUCINE AMINOPEPTIDASE-RELATED"/>
    <property type="match status" value="1"/>
</dbReference>
<dbReference type="Pfam" id="PF00883">
    <property type="entry name" value="Peptidase_M17"/>
    <property type="match status" value="1"/>
</dbReference>
<dbReference type="Pfam" id="PF02789">
    <property type="entry name" value="Peptidase_M17_N"/>
    <property type="match status" value="1"/>
</dbReference>
<dbReference type="PRINTS" id="PR00481">
    <property type="entry name" value="LAMNOPPTDASE"/>
</dbReference>
<dbReference type="SUPFAM" id="SSF52949">
    <property type="entry name" value="Macro domain-like"/>
    <property type="match status" value="1"/>
</dbReference>
<dbReference type="SUPFAM" id="SSF53187">
    <property type="entry name" value="Zn-dependent exopeptidases"/>
    <property type="match status" value="1"/>
</dbReference>
<dbReference type="PROSITE" id="PS00631">
    <property type="entry name" value="CYTOSOL_AP"/>
    <property type="match status" value="1"/>
</dbReference>
<feature type="chain" id="PRO_1000098297" description="Probable cytosol aminopeptidase">
    <location>
        <begin position="1"/>
        <end position="482"/>
    </location>
</feature>
<feature type="active site" evidence="1">
    <location>
        <position position="263"/>
    </location>
</feature>
<feature type="active site" evidence="1">
    <location>
        <position position="337"/>
    </location>
</feature>
<feature type="binding site" evidence="1">
    <location>
        <position position="251"/>
    </location>
    <ligand>
        <name>Mn(2+)</name>
        <dbReference type="ChEBI" id="CHEBI:29035"/>
        <label>2</label>
    </ligand>
</feature>
<feature type="binding site" evidence="1">
    <location>
        <position position="256"/>
    </location>
    <ligand>
        <name>Mn(2+)</name>
        <dbReference type="ChEBI" id="CHEBI:29035"/>
        <label>1</label>
    </ligand>
</feature>
<feature type="binding site" evidence="1">
    <location>
        <position position="256"/>
    </location>
    <ligand>
        <name>Mn(2+)</name>
        <dbReference type="ChEBI" id="CHEBI:29035"/>
        <label>2</label>
    </ligand>
</feature>
<feature type="binding site" evidence="1">
    <location>
        <position position="274"/>
    </location>
    <ligand>
        <name>Mn(2+)</name>
        <dbReference type="ChEBI" id="CHEBI:29035"/>
        <label>2</label>
    </ligand>
</feature>
<feature type="binding site" evidence="1">
    <location>
        <position position="333"/>
    </location>
    <ligand>
        <name>Mn(2+)</name>
        <dbReference type="ChEBI" id="CHEBI:29035"/>
        <label>1</label>
    </ligand>
</feature>
<feature type="binding site" evidence="1">
    <location>
        <position position="335"/>
    </location>
    <ligand>
        <name>Mn(2+)</name>
        <dbReference type="ChEBI" id="CHEBI:29035"/>
        <label>1</label>
    </ligand>
</feature>
<feature type="binding site" evidence="1">
    <location>
        <position position="335"/>
    </location>
    <ligand>
        <name>Mn(2+)</name>
        <dbReference type="ChEBI" id="CHEBI:29035"/>
        <label>2</label>
    </ligand>
</feature>